<comment type="function">
    <text evidence="1">This protein binds to the 23S rRNA, and is important in its secondary structure. It is located near the subunit interface in the base of the L7/L12 stalk, and near the tRNA binding site of the peptidyltransferase center.</text>
</comment>
<comment type="subunit">
    <text evidence="1">Part of the 50S ribosomal subunit.</text>
</comment>
<comment type="similarity">
    <text evidence="1">Belongs to the universal ribosomal protein uL6 family.</text>
</comment>
<evidence type="ECO:0000255" key="1">
    <source>
        <dbReference type="HAMAP-Rule" id="MF_01365"/>
    </source>
</evidence>
<evidence type="ECO:0000305" key="2"/>
<feature type="chain" id="PRO_1000143945" description="Large ribosomal subunit protein uL6">
    <location>
        <begin position="1"/>
        <end position="180"/>
    </location>
</feature>
<organism>
    <name type="scientific">Borreliella burgdorferi (strain ZS7)</name>
    <name type="common">Borrelia burgdorferi</name>
    <dbReference type="NCBI Taxonomy" id="445985"/>
    <lineage>
        <taxon>Bacteria</taxon>
        <taxon>Pseudomonadati</taxon>
        <taxon>Spirochaetota</taxon>
        <taxon>Spirochaetia</taxon>
        <taxon>Spirochaetales</taxon>
        <taxon>Borreliaceae</taxon>
        <taxon>Borreliella</taxon>
    </lineage>
</organism>
<accession>B7J258</accession>
<protein>
    <recommendedName>
        <fullName evidence="1">Large ribosomal subunit protein uL6</fullName>
    </recommendedName>
    <alternativeName>
        <fullName evidence="2">50S ribosomal protein L6</fullName>
    </alternativeName>
</protein>
<proteinExistence type="inferred from homology"/>
<sequence length="180" mass="19938">MSRIGRLPIKIPDAVKVDVKDNLVIVEGIRGRLVQDIKDSINVKVENGSVIVDRVLNDKKAKAYHGLYRSLIFNMVKGVTEGFSKSLTINGIGYRVEQQGNSLFLSLGYSTQFEYVIPDGISVKLDGNTKISVEGIDKFKVGQVAAEIRSLKKPEPYKGKGIKYDNEVIRRKVGKSGVKK</sequence>
<dbReference type="EMBL" id="CP001205">
    <property type="protein sequence ID" value="ACK74669.1"/>
    <property type="molecule type" value="Genomic_DNA"/>
</dbReference>
<dbReference type="RefSeq" id="WP_002656835.1">
    <property type="nucleotide sequence ID" value="NC_011728.1"/>
</dbReference>
<dbReference type="SMR" id="B7J258"/>
<dbReference type="GeneID" id="56567928"/>
<dbReference type="KEGG" id="bbz:BbuZS7_0504"/>
<dbReference type="HOGENOM" id="CLU_065464_1_2_12"/>
<dbReference type="Proteomes" id="UP000006901">
    <property type="component" value="Chromosome"/>
</dbReference>
<dbReference type="GO" id="GO:0022625">
    <property type="term" value="C:cytosolic large ribosomal subunit"/>
    <property type="evidence" value="ECO:0007669"/>
    <property type="project" value="TreeGrafter"/>
</dbReference>
<dbReference type="GO" id="GO:0019843">
    <property type="term" value="F:rRNA binding"/>
    <property type="evidence" value="ECO:0007669"/>
    <property type="project" value="UniProtKB-UniRule"/>
</dbReference>
<dbReference type="GO" id="GO:0003735">
    <property type="term" value="F:structural constituent of ribosome"/>
    <property type="evidence" value="ECO:0007669"/>
    <property type="project" value="InterPro"/>
</dbReference>
<dbReference type="GO" id="GO:0002181">
    <property type="term" value="P:cytoplasmic translation"/>
    <property type="evidence" value="ECO:0007669"/>
    <property type="project" value="TreeGrafter"/>
</dbReference>
<dbReference type="FunFam" id="3.90.930.12:FF:000001">
    <property type="entry name" value="50S ribosomal protein L6"/>
    <property type="match status" value="1"/>
</dbReference>
<dbReference type="FunFam" id="3.90.930.12:FF:000002">
    <property type="entry name" value="50S ribosomal protein L6"/>
    <property type="match status" value="1"/>
</dbReference>
<dbReference type="Gene3D" id="3.90.930.12">
    <property type="entry name" value="Ribosomal protein L6, alpha-beta domain"/>
    <property type="match status" value="2"/>
</dbReference>
<dbReference type="HAMAP" id="MF_01365_B">
    <property type="entry name" value="Ribosomal_uL6_B"/>
    <property type="match status" value="1"/>
</dbReference>
<dbReference type="InterPro" id="IPR000702">
    <property type="entry name" value="Ribosomal_uL6-like"/>
</dbReference>
<dbReference type="InterPro" id="IPR036789">
    <property type="entry name" value="Ribosomal_uL6-like_a/b-dom_sf"/>
</dbReference>
<dbReference type="InterPro" id="IPR020040">
    <property type="entry name" value="Ribosomal_uL6_a/b-dom"/>
</dbReference>
<dbReference type="InterPro" id="IPR019906">
    <property type="entry name" value="Ribosomal_uL6_bac-type"/>
</dbReference>
<dbReference type="InterPro" id="IPR002358">
    <property type="entry name" value="Ribosomal_uL6_CS"/>
</dbReference>
<dbReference type="NCBIfam" id="TIGR03654">
    <property type="entry name" value="L6_bact"/>
    <property type="match status" value="1"/>
</dbReference>
<dbReference type="PANTHER" id="PTHR11655">
    <property type="entry name" value="60S/50S RIBOSOMAL PROTEIN L6/L9"/>
    <property type="match status" value="1"/>
</dbReference>
<dbReference type="PANTHER" id="PTHR11655:SF14">
    <property type="entry name" value="LARGE RIBOSOMAL SUBUNIT PROTEIN UL6M"/>
    <property type="match status" value="1"/>
</dbReference>
<dbReference type="Pfam" id="PF00347">
    <property type="entry name" value="Ribosomal_L6"/>
    <property type="match status" value="2"/>
</dbReference>
<dbReference type="PIRSF" id="PIRSF002162">
    <property type="entry name" value="Ribosomal_L6"/>
    <property type="match status" value="1"/>
</dbReference>
<dbReference type="PRINTS" id="PR00059">
    <property type="entry name" value="RIBOSOMALL6"/>
</dbReference>
<dbReference type="SUPFAM" id="SSF56053">
    <property type="entry name" value="Ribosomal protein L6"/>
    <property type="match status" value="2"/>
</dbReference>
<dbReference type="PROSITE" id="PS00525">
    <property type="entry name" value="RIBOSOMAL_L6_1"/>
    <property type="match status" value="1"/>
</dbReference>
<gene>
    <name evidence="1" type="primary">rplF</name>
    <name type="ordered locus">BbuZS7_0504</name>
</gene>
<keyword id="KW-0687">Ribonucleoprotein</keyword>
<keyword id="KW-0689">Ribosomal protein</keyword>
<keyword id="KW-0694">RNA-binding</keyword>
<keyword id="KW-0699">rRNA-binding</keyword>
<name>RL6_BORBZ</name>
<reference key="1">
    <citation type="journal article" date="2011" name="J. Bacteriol.">
        <title>Whole-genome sequences of thirteen isolates of Borrelia burgdorferi.</title>
        <authorList>
            <person name="Schutzer S.E."/>
            <person name="Fraser-Liggett C.M."/>
            <person name="Casjens S.R."/>
            <person name="Qiu W.G."/>
            <person name="Dunn J.J."/>
            <person name="Mongodin E.F."/>
            <person name="Luft B.J."/>
        </authorList>
    </citation>
    <scope>NUCLEOTIDE SEQUENCE [LARGE SCALE GENOMIC DNA]</scope>
    <source>
        <strain>ZS7</strain>
    </source>
</reference>